<sequence>MSTKNFRVSDGDWICPDKKCGNVNFARRTSCNRCGREKTTEAKMMKAGGTEIGKTLAEKSRGLFSANDWQCKTCSNVNWARRSECNMCNTPKYAKLEERTGYGGGFNERENVEYIEREESDGEYDEFGRKKKKYRGKAVGPASILKEVEDKESEGEEEDEDEDLSKYKLDEDEDEDDADLSKYNLDASEEEDSNKKKSNRRSRSKSRSSHSRSSSRSSSPSSSRSRSRSRSRSSSSSQSRSHSGSREHSRSRGSKSRSSSRSHRGSSSPRKRSYSSSSSSPERDRKRSRSRPSSPAVRKKRRTRSRSPERHHRSSSGSTHSGSRSSSKKK</sequence>
<protein>
    <recommendedName>
        <fullName>Zinc finger Ran-binding domain-containing protein 2</fullName>
    </recommendedName>
    <alternativeName>
        <fullName>Zinc finger protein 265</fullName>
    </alternativeName>
    <alternativeName>
        <fullName>Zinc finger, splicing</fullName>
    </alternativeName>
</protein>
<comment type="function">
    <text evidence="1 2">Splice factor required for alternative splicing of TRA2B/SFRS10 transcripts. Binds to ssRNA containing the consensus sequence 5'-AGGUAA-3' (By similarity). May interfere with constitutive 5'-splice site selection (By similarity).</text>
</comment>
<comment type="subunit">
    <text evidence="1">Interacts with the C-terminal half of SNRP70/U1-70K, the Arg/Ser-rich domain of AKAP17A as well as with U2AF1 and CLK1.</text>
</comment>
<comment type="subcellular location">
    <subcellularLocation>
        <location evidence="1">Nucleus</location>
    </subcellularLocation>
</comment>
<comment type="tissue specificity">
    <text>Expressed in kidney; more specifically in renal juxtaglomerular (JG) cells.</text>
</comment>
<comment type="domain">
    <text evidence="1">The RanBP2-type zinc fingers mediate binding to RNA.</text>
</comment>
<comment type="similarity">
    <text evidence="6">Belongs to the ZRANB2 family.</text>
</comment>
<comment type="sequence caution" evidence="6">
    <conflict type="frameshift">
        <sequence resource="EMBL-CDS" id="AAC02295"/>
    </conflict>
</comment>
<comment type="sequence caution" evidence="6">
    <conflict type="frameshift">
        <sequence resource="EMBL-CDS" id="AAC02296"/>
    </conflict>
</comment>
<comment type="sequence caution" evidence="6">
    <conflict type="frameshift">
        <sequence resource="EMBL-CDS" id="AAC02297"/>
    </conflict>
</comment>
<feature type="chain" id="PRO_0000066587" description="Zinc finger Ran-binding domain-containing protein 2">
    <location>
        <begin position="1"/>
        <end position="330"/>
    </location>
</feature>
<feature type="zinc finger region" description="RanBP2-type 1" evidence="4">
    <location>
        <begin position="9"/>
        <end position="40"/>
    </location>
</feature>
<feature type="zinc finger region" description="RanBP2-type 2" evidence="4">
    <location>
        <begin position="65"/>
        <end position="94"/>
    </location>
</feature>
<feature type="region of interest" description="Disordered" evidence="5">
    <location>
        <begin position="117"/>
        <end position="330"/>
    </location>
</feature>
<feature type="region of interest" description="Required for nuclear targeting" evidence="1">
    <location>
        <begin position="151"/>
        <end position="324"/>
    </location>
</feature>
<feature type="compositionally biased region" description="Acidic residues" evidence="5">
    <location>
        <begin position="150"/>
        <end position="163"/>
    </location>
</feature>
<feature type="compositionally biased region" description="Basic residues" evidence="5">
    <location>
        <begin position="196"/>
        <end position="210"/>
    </location>
</feature>
<feature type="compositionally biased region" description="Low complexity" evidence="5">
    <location>
        <begin position="211"/>
        <end position="224"/>
    </location>
</feature>
<feature type="compositionally biased region" description="Low complexity" evidence="5">
    <location>
        <begin position="232"/>
        <end position="242"/>
    </location>
</feature>
<feature type="compositionally biased region" description="Basic residues" evidence="5">
    <location>
        <begin position="251"/>
        <end position="273"/>
    </location>
</feature>
<feature type="compositionally biased region" description="Basic residues" evidence="5">
    <location>
        <begin position="297"/>
        <end position="314"/>
    </location>
</feature>
<feature type="compositionally biased region" description="Low complexity" evidence="5">
    <location>
        <begin position="315"/>
        <end position="330"/>
    </location>
</feature>
<feature type="modified residue" description="Phosphoserine" evidence="2">
    <location>
        <position position="9"/>
    </location>
</feature>
<feature type="modified residue" description="N6-acetyllysine" evidence="3">
    <location>
        <position position="18"/>
    </location>
</feature>
<feature type="modified residue" description="N6-acetyllysine" evidence="2">
    <location>
        <position position="54"/>
    </location>
</feature>
<feature type="modified residue" description="N6-acetyllysine" evidence="3">
    <location>
        <position position="92"/>
    </location>
</feature>
<feature type="modified residue" description="Phosphoserine" evidence="8">
    <location>
        <position position="120"/>
    </location>
</feature>
<feature type="modified residue" description="Phosphoserine" evidence="7 8">
    <location>
        <position position="153"/>
    </location>
</feature>
<feature type="modified residue" description="Phosphoserine" evidence="2">
    <location>
        <position position="181"/>
    </location>
</feature>
<feature type="modified residue" description="Phosphoserine" evidence="8">
    <location>
        <position position="188"/>
    </location>
</feature>
<feature type="modified residue" description="Phosphoserine" evidence="2">
    <location>
        <position position="193"/>
    </location>
</feature>
<dbReference type="EMBL" id="AF013965">
    <property type="protein sequence ID" value="AAC02295.1"/>
    <property type="status" value="ALT_FRAME"/>
    <property type="molecule type" value="mRNA"/>
</dbReference>
<dbReference type="EMBL" id="AF013966">
    <property type="protein sequence ID" value="AAC02296.1"/>
    <property type="status" value="ALT_FRAME"/>
    <property type="molecule type" value="Genomic_DNA"/>
</dbReference>
<dbReference type="EMBL" id="AF013967">
    <property type="protein sequence ID" value="AAC02297.1"/>
    <property type="status" value="ALT_FRAME"/>
    <property type="molecule type" value="mRNA"/>
</dbReference>
<dbReference type="EMBL" id="BC087012">
    <property type="protein sequence ID" value="AAH87012.1"/>
    <property type="molecule type" value="mRNA"/>
</dbReference>
<dbReference type="RefSeq" id="NP_113804.2">
    <property type="nucleotide sequence ID" value="NM_031616.2"/>
</dbReference>
<dbReference type="RefSeq" id="XP_017446546.1">
    <property type="nucleotide sequence ID" value="XM_017591057.1"/>
</dbReference>
<dbReference type="SMR" id="O35986"/>
<dbReference type="BioGRID" id="248628">
    <property type="interactions" value="1"/>
</dbReference>
<dbReference type="FunCoup" id="O35986">
    <property type="interactions" value="28"/>
</dbReference>
<dbReference type="STRING" id="10116.ENSRNOP00000052134"/>
<dbReference type="iPTMnet" id="O35986"/>
<dbReference type="PhosphoSitePlus" id="O35986"/>
<dbReference type="jPOST" id="O35986"/>
<dbReference type="PaxDb" id="10116-ENSRNOP00000052134"/>
<dbReference type="Ensembl" id="ENSRNOT00000098797.1">
    <property type="protein sequence ID" value="ENSRNOP00000093503.1"/>
    <property type="gene ID" value="ENSRNOG00000009990.7"/>
</dbReference>
<dbReference type="GeneID" id="58821"/>
<dbReference type="KEGG" id="rno:58821"/>
<dbReference type="AGR" id="RGD:61854"/>
<dbReference type="CTD" id="9406"/>
<dbReference type="RGD" id="61854">
    <property type="gene designation" value="Zranb2"/>
</dbReference>
<dbReference type="eggNOG" id="KOG1995">
    <property type="taxonomic scope" value="Eukaryota"/>
</dbReference>
<dbReference type="GeneTree" id="ENSGT00730000111078"/>
<dbReference type="HOGENOM" id="CLU_061048_0_0_1"/>
<dbReference type="InParanoid" id="O35986"/>
<dbReference type="OMA" id="WICPDID"/>
<dbReference type="OrthoDB" id="1878647at2759"/>
<dbReference type="PhylomeDB" id="O35986"/>
<dbReference type="TreeFam" id="TF105996"/>
<dbReference type="PRO" id="PR:O35986"/>
<dbReference type="Proteomes" id="UP000002494">
    <property type="component" value="Chromosome 2"/>
</dbReference>
<dbReference type="GO" id="GO:0005634">
    <property type="term" value="C:nucleus"/>
    <property type="evidence" value="ECO:0007669"/>
    <property type="project" value="UniProtKB-SubCell"/>
</dbReference>
<dbReference type="GO" id="GO:0001530">
    <property type="term" value="F:lipopolysaccharide binding"/>
    <property type="evidence" value="ECO:0000318"/>
    <property type="project" value="GO_Central"/>
</dbReference>
<dbReference type="GO" id="GO:0003723">
    <property type="term" value="F:RNA binding"/>
    <property type="evidence" value="ECO:0007669"/>
    <property type="project" value="UniProtKB-KW"/>
</dbReference>
<dbReference type="GO" id="GO:0008270">
    <property type="term" value="F:zinc ion binding"/>
    <property type="evidence" value="ECO:0007669"/>
    <property type="project" value="UniProtKB-KW"/>
</dbReference>
<dbReference type="GO" id="GO:0006397">
    <property type="term" value="P:mRNA processing"/>
    <property type="evidence" value="ECO:0007669"/>
    <property type="project" value="UniProtKB-KW"/>
</dbReference>
<dbReference type="GO" id="GO:0008380">
    <property type="term" value="P:RNA splicing"/>
    <property type="evidence" value="ECO:0007669"/>
    <property type="project" value="UniProtKB-KW"/>
</dbReference>
<dbReference type="FunFam" id="4.10.1060.10:FF:000004">
    <property type="entry name" value="Zinc finger Ran-binding domain-containing protein 2"/>
    <property type="match status" value="1"/>
</dbReference>
<dbReference type="FunFam" id="4.10.1060.10:FF:000007">
    <property type="entry name" value="Zinc finger Ran-binding domain-containing protein 2"/>
    <property type="match status" value="1"/>
</dbReference>
<dbReference type="Gene3D" id="4.10.1060.10">
    <property type="entry name" value="Zinc finger, RanBP2-type"/>
    <property type="match status" value="2"/>
</dbReference>
<dbReference type="InterPro" id="IPR001876">
    <property type="entry name" value="Znf_RanBP2"/>
</dbReference>
<dbReference type="InterPro" id="IPR036443">
    <property type="entry name" value="Znf_RanBP2_sf"/>
</dbReference>
<dbReference type="InterPro" id="IPR017337">
    <property type="entry name" value="ZRANB2"/>
</dbReference>
<dbReference type="PANTHER" id="PTHR12999:SF21">
    <property type="entry name" value="ZINC FINGER RAN-BINDING DOMAIN-CONTAINING PROTEIN 2"/>
    <property type="match status" value="1"/>
</dbReference>
<dbReference type="PANTHER" id="PTHR12999">
    <property type="entry name" value="ZINC FINGER RAN-BINDING DOMAIN-CONTAINING PROTEIN 2 ZRANB2-RELATED"/>
    <property type="match status" value="1"/>
</dbReference>
<dbReference type="Pfam" id="PF00641">
    <property type="entry name" value="Zn_ribbon_RanBP"/>
    <property type="match status" value="2"/>
</dbReference>
<dbReference type="PIRSF" id="PIRSF037956">
    <property type="entry name" value="UCP037956_ZnF_Ran"/>
    <property type="match status" value="1"/>
</dbReference>
<dbReference type="SMART" id="SM00547">
    <property type="entry name" value="ZnF_RBZ"/>
    <property type="match status" value="2"/>
</dbReference>
<dbReference type="SUPFAM" id="SSF90209">
    <property type="entry name" value="Ran binding protein zinc finger-like"/>
    <property type="match status" value="2"/>
</dbReference>
<dbReference type="PROSITE" id="PS01358">
    <property type="entry name" value="ZF_RANBP2_1"/>
    <property type="match status" value="2"/>
</dbReference>
<dbReference type="PROSITE" id="PS50199">
    <property type="entry name" value="ZF_RANBP2_2"/>
    <property type="match status" value="2"/>
</dbReference>
<name>ZRAB2_RAT</name>
<accession>O35986</accession>
<accession>A1A4C8</accession>
<keyword id="KW-0007">Acetylation</keyword>
<keyword id="KW-0479">Metal-binding</keyword>
<keyword id="KW-0507">mRNA processing</keyword>
<keyword id="KW-0508">mRNA splicing</keyword>
<keyword id="KW-0539">Nucleus</keyword>
<keyword id="KW-0597">Phosphoprotein</keyword>
<keyword id="KW-1185">Reference proteome</keyword>
<keyword id="KW-0677">Repeat</keyword>
<keyword id="KW-0694">RNA-binding</keyword>
<keyword id="KW-0862">Zinc</keyword>
<keyword id="KW-0863">Zinc-finger</keyword>
<proteinExistence type="evidence at protein level"/>
<organism>
    <name type="scientific">Rattus norvegicus</name>
    <name type="common">Rat</name>
    <dbReference type="NCBI Taxonomy" id="10116"/>
    <lineage>
        <taxon>Eukaryota</taxon>
        <taxon>Metazoa</taxon>
        <taxon>Chordata</taxon>
        <taxon>Craniata</taxon>
        <taxon>Vertebrata</taxon>
        <taxon>Euteleostomi</taxon>
        <taxon>Mammalia</taxon>
        <taxon>Eutheria</taxon>
        <taxon>Euarchontoglires</taxon>
        <taxon>Glires</taxon>
        <taxon>Rodentia</taxon>
        <taxon>Myomorpha</taxon>
        <taxon>Muroidea</taxon>
        <taxon>Muridae</taxon>
        <taxon>Murinae</taxon>
        <taxon>Rattus</taxon>
    </lineage>
</organism>
<reference key="1">
    <citation type="journal article" date="1997" name="Am. J. Physiol.">
        <title>Zis: a developmentally regulated gene expressed in juxtaglomerular cells.</title>
        <authorList>
            <person name="Karginova E.A."/>
            <person name="Pentz E.S."/>
            <person name="Kazakova I.G."/>
            <person name="Norwood V.F."/>
            <person name="Carey R.M."/>
            <person name="Gomez R.A."/>
        </authorList>
    </citation>
    <scope>NUCLEOTIDE SEQUENCE [GENOMIC DNA / MRNA]</scope>
    <source>
        <strain>Sprague-Dawley</strain>
        <tissue>Kidney</tissue>
    </source>
</reference>
<reference key="2">
    <citation type="journal article" date="2004" name="Genome Res.">
        <title>The status, quality, and expansion of the NIH full-length cDNA project: the Mammalian Gene Collection (MGC).</title>
        <authorList>
            <consortium name="The MGC Project Team"/>
        </authorList>
    </citation>
    <scope>NUCLEOTIDE SEQUENCE [LARGE SCALE MRNA]</scope>
    <source>
        <tissue>Heart</tissue>
    </source>
</reference>
<reference key="3">
    <citation type="journal article" date="2006" name="Proc. Natl. Acad. Sci. U.S.A.">
        <title>Quantitative phosphoproteomics of vasopressin-sensitive renal cells: regulation of aquaporin-2 phosphorylation at two sites.</title>
        <authorList>
            <person name="Hoffert J.D."/>
            <person name="Pisitkun T."/>
            <person name="Wang G."/>
            <person name="Shen R.-F."/>
            <person name="Knepper M.A."/>
        </authorList>
    </citation>
    <scope>PHOSPHORYLATION [LARGE SCALE ANALYSIS] AT SER-153</scope>
    <scope>IDENTIFICATION BY MASS SPECTROMETRY [LARGE SCALE ANALYSIS]</scope>
</reference>
<reference key="4">
    <citation type="journal article" date="2012" name="Nat. Commun.">
        <title>Quantitative maps of protein phosphorylation sites across 14 different rat organs and tissues.</title>
        <authorList>
            <person name="Lundby A."/>
            <person name="Secher A."/>
            <person name="Lage K."/>
            <person name="Nordsborg N.B."/>
            <person name="Dmytriyev A."/>
            <person name="Lundby C."/>
            <person name="Olsen J.V."/>
        </authorList>
    </citation>
    <scope>PHOSPHORYLATION [LARGE SCALE ANALYSIS] AT SER-120; SER-153 AND SER-188</scope>
    <scope>IDENTIFICATION BY MASS SPECTROMETRY [LARGE SCALE ANALYSIS]</scope>
</reference>
<gene>
    <name type="primary">Zranb2</name>
    <name type="synonym">Zfp265</name>
    <name type="synonym">Zis</name>
    <name type="synonym">Znf265</name>
</gene>
<evidence type="ECO:0000250" key="1"/>
<evidence type="ECO:0000250" key="2">
    <source>
        <dbReference type="UniProtKB" id="O95218"/>
    </source>
</evidence>
<evidence type="ECO:0000250" key="3">
    <source>
        <dbReference type="UniProtKB" id="Q9R020"/>
    </source>
</evidence>
<evidence type="ECO:0000255" key="4">
    <source>
        <dbReference type="PROSITE-ProRule" id="PRU00322"/>
    </source>
</evidence>
<evidence type="ECO:0000256" key="5">
    <source>
        <dbReference type="SAM" id="MobiDB-lite"/>
    </source>
</evidence>
<evidence type="ECO:0000305" key="6"/>
<evidence type="ECO:0007744" key="7">
    <source>
    </source>
</evidence>
<evidence type="ECO:0007744" key="8">
    <source>
    </source>
</evidence>